<proteinExistence type="evidence at protein level"/>
<evidence type="ECO:0000250" key="1">
    <source>
        <dbReference type="UniProtKB" id="P05300"/>
    </source>
</evidence>
<evidence type="ECO:0000250" key="2">
    <source>
        <dbReference type="UniProtKB" id="P11279"/>
    </source>
</evidence>
<evidence type="ECO:0000255" key="3"/>
<evidence type="ECO:0000255" key="4">
    <source>
        <dbReference type="PROSITE-ProRule" id="PRU00740"/>
    </source>
</evidence>
<evidence type="ECO:0000256" key="5">
    <source>
        <dbReference type="SAM" id="MobiDB-lite"/>
    </source>
</evidence>
<evidence type="ECO:0000269" key="6">
    <source>
    </source>
</evidence>
<evidence type="ECO:0000269" key="7">
    <source>
    </source>
</evidence>
<evidence type="ECO:0000269" key="8">
    <source>
    </source>
</evidence>
<evidence type="ECO:0000269" key="9">
    <source>
    </source>
</evidence>
<evidence type="ECO:0000269" key="10">
    <source>
    </source>
</evidence>
<evidence type="ECO:0000269" key="11">
    <source>
    </source>
</evidence>
<evidence type="ECO:0000269" key="12">
    <source>
    </source>
</evidence>
<evidence type="ECO:0000269" key="13">
    <source>
    </source>
</evidence>
<evidence type="ECO:0000269" key="14">
    <source>
    </source>
</evidence>
<evidence type="ECO:0000269" key="15">
    <source>
    </source>
</evidence>
<evidence type="ECO:0000269" key="16">
    <source>
    </source>
</evidence>
<evidence type="ECO:0000269" key="17">
    <source>
    </source>
</evidence>
<evidence type="ECO:0000305" key="18"/>
<evidence type="ECO:0000305" key="19">
    <source>
    </source>
</evidence>
<evidence type="ECO:0007744" key="20">
    <source>
        <dbReference type="PDB" id="5GV0"/>
    </source>
</evidence>
<evidence type="ECO:0007829" key="21">
    <source>
        <dbReference type="PDB" id="5GV0"/>
    </source>
</evidence>
<keyword id="KW-0002">3D-structure</keyword>
<keyword id="KW-1003">Cell membrane</keyword>
<keyword id="KW-0903">Direct protein sequencing</keyword>
<keyword id="KW-1015">Disulfide bond</keyword>
<keyword id="KW-0967">Endosome</keyword>
<keyword id="KW-0325">Glycoprotein</keyword>
<keyword id="KW-0458">Lysosome</keyword>
<keyword id="KW-0472">Membrane</keyword>
<keyword id="KW-1185">Reference proteome</keyword>
<keyword id="KW-0732">Signal</keyword>
<keyword id="KW-0812">Transmembrane</keyword>
<keyword id="KW-1133">Transmembrane helix</keyword>
<dbReference type="EMBL" id="M32015">
    <property type="protein sequence ID" value="AAA39428.1"/>
    <property type="molecule type" value="mRNA"/>
</dbReference>
<dbReference type="EMBL" id="M25244">
    <property type="protein sequence ID" value="AAA39869.1"/>
    <property type="molecule type" value="mRNA"/>
</dbReference>
<dbReference type="EMBL" id="BC049097">
    <property type="protein sequence ID" value="AAH49097.1"/>
    <property type="molecule type" value="mRNA"/>
</dbReference>
<dbReference type="EMBL" id="J03881">
    <property type="protein sequence ID" value="AAA39411.1"/>
    <property type="molecule type" value="mRNA"/>
</dbReference>
<dbReference type="CCDS" id="CCDS22106.1"/>
<dbReference type="PIR" id="A28067">
    <property type="entry name" value="A28067"/>
</dbReference>
<dbReference type="PIR" id="A60534">
    <property type="entry name" value="A60534"/>
</dbReference>
<dbReference type="RefSeq" id="NP_001304282.1">
    <property type="nucleotide sequence ID" value="NM_001317353.1"/>
</dbReference>
<dbReference type="RefSeq" id="NP_034814.2">
    <property type="nucleotide sequence ID" value="NM_010684.3"/>
</dbReference>
<dbReference type="PDB" id="5GV0">
    <property type="method" value="X-ray"/>
    <property type="resolution" value="1.50 A"/>
    <property type="chains" value="A=208-370"/>
</dbReference>
<dbReference type="PDBsum" id="5GV0"/>
<dbReference type="SMR" id="P11438"/>
<dbReference type="BioGRID" id="201105">
    <property type="interactions" value="5"/>
</dbReference>
<dbReference type="FunCoup" id="P11438">
    <property type="interactions" value="2213"/>
</dbReference>
<dbReference type="IntAct" id="P11438">
    <property type="interactions" value="19"/>
</dbReference>
<dbReference type="MINT" id="P11438"/>
<dbReference type="STRING" id="10090.ENSMUSP00000033824"/>
<dbReference type="GlyConnect" id="2494">
    <property type="glycosylation" value="22 N-Linked glycans (8 sites)"/>
</dbReference>
<dbReference type="GlyCosmos" id="P11438">
    <property type="glycosylation" value="19 sites, 21 glycans"/>
</dbReference>
<dbReference type="GlyGen" id="P11438">
    <property type="glycosylation" value="21 sites, 38 N-linked glycans (16 sites), 1 O-linked glycan (1 site)"/>
</dbReference>
<dbReference type="iPTMnet" id="P11438"/>
<dbReference type="PhosphoSitePlus" id="P11438"/>
<dbReference type="SwissPalm" id="P11438"/>
<dbReference type="CPTAC" id="non-CPTAC-3834"/>
<dbReference type="jPOST" id="P11438"/>
<dbReference type="PaxDb" id="10090-ENSMUSP00000033824"/>
<dbReference type="PeptideAtlas" id="P11438"/>
<dbReference type="ProteomicsDB" id="264913"/>
<dbReference type="Pumba" id="P11438"/>
<dbReference type="Antibodypedia" id="2703">
    <property type="antibodies" value="1482 antibodies from 51 providers"/>
</dbReference>
<dbReference type="DNASU" id="16783"/>
<dbReference type="Ensembl" id="ENSMUST00000033824.8">
    <property type="protein sequence ID" value="ENSMUSP00000033824.7"/>
    <property type="gene ID" value="ENSMUSG00000031447.8"/>
</dbReference>
<dbReference type="GeneID" id="16783"/>
<dbReference type="KEGG" id="mmu:16783"/>
<dbReference type="UCSC" id="uc009kxa.1">
    <property type="organism name" value="mouse"/>
</dbReference>
<dbReference type="AGR" id="MGI:96745"/>
<dbReference type="CTD" id="3916"/>
<dbReference type="MGI" id="MGI:96745">
    <property type="gene designation" value="Lamp1"/>
</dbReference>
<dbReference type="VEuPathDB" id="HostDB:ENSMUSG00000031447"/>
<dbReference type="eggNOG" id="KOG4818">
    <property type="taxonomic scope" value="Eukaryota"/>
</dbReference>
<dbReference type="GeneTree" id="ENSGT00950000182899"/>
<dbReference type="HOGENOM" id="CLU_055379_2_0_1"/>
<dbReference type="InParanoid" id="P11438"/>
<dbReference type="OMA" id="SSNQIHM"/>
<dbReference type="OrthoDB" id="10037042at2759"/>
<dbReference type="PhylomeDB" id="P11438"/>
<dbReference type="TreeFam" id="TF316339"/>
<dbReference type="Reactome" id="R-MMU-6798695">
    <property type="pathway name" value="Neutrophil degranulation"/>
</dbReference>
<dbReference type="BioGRID-ORCS" id="16783">
    <property type="hits" value="2 hits in 76 CRISPR screens"/>
</dbReference>
<dbReference type="CD-CODE" id="8F289D40">
    <property type="entry name" value="ELVA"/>
</dbReference>
<dbReference type="ChiTaRS" id="Lamp1">
    <property type="organism name" value="mouse"/>
</dbReference>
<dbReference type="PRO" id="PR:P11438"/>
<dbReference type="Proteomes" id="UP000000589">
    <property type="component" value="Chromosome 8"/>
</dbReference>
<dbReference type="RNAct" id="P11438">
    <property type="molecule type" value="protein"/>
</dbReference>
<dbReference type="Bgee" id="ENSMUSG00000031447">
    <property type="expression patterns" value="Expressed in stroma of bone marrow and 270 other cell types or tissues"/>
</dbReference>
<dbReference type="ExpressionAtlas" id="P11438">
    <property type="expression patterns" value="baseline and differential"/>
</dbReference>
<dbReference type="GO" id="GO:0044754">
    <property type="term" value="C:autolysosome"/>
    <property type="evidence" value="ECO:0000314"/>
    <property type="project" value="MGI"/>
</dbReference>
<dbReference type="GO" id="GO:0000421">
    <property type="term" value="C:autophagosome membrane"/>
    <property type="evidence" value="ECO:0000314"/>
    <property type="project" value="MGI"/>
</dbReference>
<dbReference type="GO" id="GO:0009986">
    <property type="term" value="C:cell surface"/>
    <property type="evidence" value="ECO:0000314"/>
    <property type="project" value="BHF-UCL"/>
</dbReference>
<dbReference type="GO" id="GO:0044194">
    <property type="term" value="C:cytolytic granule"/>
    <property type="evidence" value="ECO:0000314"/>
    <property type="project" value="UniProtKB"/>
</dbReference>
<dbReference type="GO" id="GO:0101004">
    <property type="term" value="C:cytolytic granule membrane"/>
    <property type="evidence" value="ECO:0000250"/>
    <property type="project" value="UniProtKB"/>
</dbReference>
<dbReference type="GO" id="GO:0005737">
    <property type="term" value="C:cytoplasm"/>
    <property type="evidence" value="ECO:0000266"/>
    <property type="project" value="MGI"/>
</dbReference>
<dbReference type="GO" id="GO:0005829">
    <property type="term" value="C:cytosol"/>
    <property type="evidence" value="ECO:0007669"/>
    <property type="project" value="GOC"/>
</dbReference>
<dbReference type="GO" id="GO:0005768">
    <property type="term" value="C:endosome"/>
    <property type="evidence" value="ECO:0000314"/>
    <property type="project" value="MGI"/>
</dbReference>
<dbReference type="GO" id="GO:0010008">
    <property type="term" value="C:endosome membrane"/>
    <property type="evidence" value="ECO:0000250"/>
    <property type="project" value="UniProtKB"/>
</dbReference>
<dbReference type="GO" id="GO:0009897">
    <property type="term" value="C:external side of plasma membrane"/>
    <property type="evidence" value="ECO:0000314"/>
    <property type="project" value="MGI"/>
</dbReference>
<dbReference type="GO" id="GO:0005770">
    <property type="term" value="C:late endosome"/>
    <property type="evidence" value="ECO:0000314"/>
    <property type="project" value="MGI"/>
</dbReference>
<dbReference type="GO" id="GO:0031902">
    <property type="term" value="C:late endosome membrane"/>
    <property type="evidence" value="ECO:0007669"/>
    <property type="project" value="UniProtKB-SubCell"/>
</dbReference>
<dbReference type="GO" id="GO:0005764">
    <property type="term" value="C:lysosome"/>
    <property type="evidence" value="ECO:0000314"/>
    <property type="project" value="MGI"/>
</dbReference>
<dbReference type="GO" id="GO:0042470">
    <property type="term" value="C:melanosome"/>
    <property type="evidence" value="ECO:0000314"/>
    <property type="project" value="MGI"/>
</dbReference>
<dbReference type="GO" id="GO:0005771">
    <property type="term" value="C:multivesicular body"/>
    <property type="evidence" value="ECO:0000314"/>
    <property type="project" value="MGI"/>
</dbReference>
<dbReference type="GO" id="GO:0048471">
    <property type="term" value="C:perinuclear region of cytoplasm"/>
    <property type="evidence" value="ECO:0007669"/>
    <property type="project" value="Ensembl"/>
</dbReference>
<dbReference type="GO" id="GO:0045335">
    <property type="term" value="C:phagocytic vesicle"/>
    <property type="evidence" value="ECO:0000315"/>
    <property type="project" value="AgBase"/>
</dbReference>
<dbReference type="GO" id="GO:0061474">
    <property type="term" value="C:phagolysosome membrane"/>
    <property type="evidence" value="ECO:0000314"/>
    <property type="project" value="MGI"/>
</dbReference>
<dbReference type="GO" id="GO:0042383">
    <property type="term" value="C:sarcolemma"/>
    <property type="evidence" value="ECO:0000314"/>
    <property type="project" value="MGI"/>
</dbReference>
<dbReference type="GO" id="GO:0008021">
    <property type="term" value="C:synaptic vesicle"/>
    <property type="evidence" value="ECO:0000314"/>
    <property type="project" value="MGI"/>
</dbReference>
<dbReference type="GO" id="GO:0031982">
    <property type="term" value="C:vesicle"/>
    <property type="evidence" value="ECO:0000314"/>
    <property type="project" value="MGI"/>
</dbReference>
<dbReference type="GO" id="GO:0019899">
    <property type="term" value="F:enzyme binding"/>
    <property type="evidence" value="ECO:0007669"/>
    <property type="project" value="Ensembl"/>
</dbReference>
<dbReference type="GO" id="GO:0008200">
    <property type="term" value="F:ion channel inhibitor activity"/>
    <property type="evidence" value="ECO:0000250"/>
    <property type="project" value="UniProtKB"/>
</dbReference>
<dbReference type="GO" id="GO:0019904">
    <property type="term" value="F:protein domain specific binding"/>
    <property type="evidence" value="ECO:0000353"/>
    <property type="project" value="UniProtKB"/>
</dbReference>
<dbReference type="GO" id="GO:0072594">
    <property type="term" value="P:establishment of protein localization to organelle"/>
    <property type="evidence" value="ECO:0007669"/>
    <property type="project" value="Ensembl"/>
</dbReference>
<dbReference type="GO" id="GO:0090160">
    <property type="term" value="P:Golgi to lysosome transport"/>
    <property type="evidence" value="ECO:0007669"/>
    <property type="project" value="Ensembl"/>
</dbReference>
<dbReference type="GO" id="GO:0140507">
    <property type="term" value="P:granzyme-mediated programmed cell death signaling pathway"/>
    <property type="evidence" value="ECO:0007669"/>
    <property type="project" value="Ensembl"/>
</dbReference>
<dbReference type="GO" id="GO:0007042">
    <property type="term" value="P:lysosomal lumen acidification"/>
    <property type="evidence" value="ECO:0000250"/>
    <property type="project" value="UniProtKB"/>
</dbReference>
<dbReference type="GO" id="GO:0043323">
    <property type="term" value="P:positive regulation of natural killer cell degranulation"/>
    <property type="evidence" value="ECO:0007669"/>
    <property type="project" value="Ensembl"/>
</dbReference>
<dbReference type="GO" id="GO:0050821">
    <property type="term" value="P:protein stabilization"/>
    <property type="evidence" value="ECO:0000315"/>
    <property type="project" value="UniProtKB"/>
</dbReference>
<dbReference type="GO" id="GO:1902513">
    <property type="term" value="P:regulation of organelle transport along microtubule"/>
    <property type="evidence" value="ECO:0007669"/>
    <property type="project" value="Ensembl"/>
</dbReference>
<dbReference type="GO" id="GO:0007283">
    <property type="term" value="P:spermatogenesis"/>
    <property type="evidence" value="ECO:0000304"/>
    <property type="project" value="MGI"/>
</dbReference>
<dbReference type="CDD" id="cd12087">
    <property type="entry name" value="TM_EGFR-like"/>
    <property type="match status" value="1"/>
</dbReference>
<dbReference type="FunFam" id="2.40.160.110:FF:000005">
    <property type="entry name" value="Lysosome-associated membrane glycoprotein 1"/>
    <property type="match status" value="1"/>
</dbReference>
<dbReference type="FunFam" id="2.40.160.110:FF:000001">
    <property type="entry name" value="lysosome-associated membrane glycoprotein 2 isoform X2"/>
    <property type="match status" value="1"/>
</dbReference>
<dbReference type="Gene3D" id="2.40.160.110">
    <property type="match status" value="2"/>
</dbReference>
<dbReference type="InterPro" id="IPR048528">
    <property type="entry name" value="Lamp2-like_luminal"/>
</dbReference>
<dbReference type="InterPro" id="IPR048524">
    <property type="entry name" value="Lamp2-like_TM"/>
</dbReference>
<dbReference type="InterPro" id="IPR018134">
    <property type="entry name" value="LAMP_CS"/>
</dbReference>
<dbReference type="InterPro" id="IPR002000">
    <property type="entry name" value="Lysosome-assoc_membr_glycop"/>
</dbReference>
<dbReference type="PANTHER" id="PTHR11506">
    <property type="entry name" value="LYSOSOME-ASSOCIATED MEMBRANE GLYCOPROTEIN"/>
    <property type="match status" value="1"/>
</dbReference>
<dbReference type="PANTHER" id="PTHR11506:SF35">
    <property type="entry name" value="LYSOSOME-ASSOCIATED MEMBRANE GLYCOPROTEIN 5"/>
    <property type="match status" value="1"/>
</dbReference>
<dbReference type="Pfam" id="PF01299">
    <property type="entry name" value="Lamp2-like_luminal"/>
    <property type="match status" value="2"/>
</dbReference>
<dbReference type="Pfam" id="PF21222">
    <property type="entry name" value="Lamp2_2nd"/>
    <property type="match status" value="1"/>
</dbReference>
<dbReference type="PRINTS" id="PR00336">
    <property type="entry name" value="LYSASSOCTDMP"/>
</dbReference>
<dbReference type="PROSITE" id="PS00310">
    <property type="entry name" value="LAMP_1"/>
    <property type="match status" value="2"/>
</dbReference>
<dbReference type="PROSITE" id="PS00311">
    <property type="entry name" value="LAMP_2"/>
    <property type="match status" value="1"/>
</dbReference>
<dbReference type="PROSITE" id="PS51407">
    <property type="entry name" value="LAMP_3"/>
    <property type="match status" value="1"/>
</dbReference>
<comment type="function">
    <text evidence="2 7 14 15">Lysosomal membrane glycoprotein which plays an important role in lysosome biogenesis, lysosomal pH regulation, autophagy and cholesterol homeostasis (PubMed:15121881). Acts as an important regulator of lysosomal lumen pH regulation by acting as a direct inhibitor of the proton channel TMEM175, facilitating lysosomal acidification for optimal hydrolase activity (By similarity). Also plays an important role in NK-cells cytotoxicity (PubMed:23847195). Mechanistically, participates in cytotoxic granule movement to the cell surface and perforin trafficking to the lytic granule (By similarity). In addition, protects NK-cells from degranulation-associated damage induced by their own cytotoxic granule content (PubMed:23847195). Presents carbohydrate ligands to selectins (By similarity). Also implicated in tumor cell metastasis (PubMed:2676155).</text>
</comment>
<comment type="subunit">
    <text evidence="2 12">Interacts with ABCB9; this interaction strongly stabilizes ABCB9 and protects ABCB9 against lysosomal degradation (PubMed:22641697). Interacts with FURIN (By similarity). Interacts with TMEM175; inhibiting the proton channel activity of TMEM175 (By similarity).</text>
</comment>
<comment type="subcellular location">
    <subcellularLocation>
        <location evidence="2">Lysosome membrane</location>
        <topology evidence="3">Single-pass type I membrane protein</topology>
    </subcellularLocation>
    <subcellularLocation>
        <location evidence="2">Endosome membrane</location>
        <topology evidence="3">Single-pass type I membrane protein</topology>
    </subcellularLocation>
    <subcellularLocation>
        <location evidence="2">Late endosome membrane</location>
        <topology evidence="3">Single-pass type I membrane protein</topology>
    </subcellularLocation>
    <subcellularLocation>
        <location evidence="14">Cell membrane</location>
        <topology evidence="3">Single-pass type I membrane protein</topology>
    </subcellularLocation>
    <subcellularLocation>
        <location evidence="19">Cytolytic granule membrane</location>
        <topology evidence="3">Single-pass type I membrane protein</topology>
    </subcellularLocation>
    <text evidence="1 2">This protein shuttles between lysosomes, endosomes, and the plasma membrane (By similarity). Colocalizes with OSBPL1A at the late endosome (By similarity).</text>
</comment>
<comment type="PTM">
    <text evidence="2">O- and N-glycosylated; some of the N-glycans attached to LAMP-1 are polylactosaminoglycans.</text>
</comment>
<comment type="disruption phenotype">
    <text evidence="6 7 14">Deficient mice are viable and fertile (PubMed:10212251). However, mice deficient in both Lamp1 and Lamp2 are embryonic lethal, with the accumulation of autophagic vacuoles in many tissues (PubMed:15121881). In addition, LAMP1 deletion results in increased NK-cell apoptosis upon target cell-induced degranulation (PubMed:23847195).</text>
</comment>
<comment type="similarity">
    <text evidence="4">Belongs to the LAMP family.</text>
</comment>
<accession>P11438</accession>
<accession>Q62020</accession>
<gene>
    <name type="primary">Lamp1</name>
    <name type="synonym">Lamp-1</name>
</gene>
<organism>
    <name type="scientific">Mus musculus</name>
    <name type="common">Mouse</name>
    <dbReference type="NCBI Taxonomy" id="10090"/>
    <lineage>
        <taxon>Eukaryota</taxon>
        <taxon>Metazoa</taxon>
        <taxon>Chordata</taxon>
        <taxon>Craniata</taxon>
        <taxon>Vertebrata</taxon>
        <taxon>Euteleostomi</taxon>
        <taxon>Mammalia</taxon>
        <taxon>Eutheria</taxon>
        <taxon>Euarchontoglires</taxon>
        <taxon>Glires</taxon>
        <taxon>Rodentia</taxon>
        <taxon>Myomorpha</taxon>
        <taxon>Muroidea</taxon>
        <taxon>Muridae</taxon>
        <taxon>Murinae</taxon>
        <taxon>Mus</taxon>
        <taxon>Mus</taxon>
    </lineage>
</organism>
<sequence>MAAPGARRPLLLLLLAGLAHGASALFEVKNNGTTCIMASFSASFLTTYETANGSQIVNISLPASAEVLKNGSSCGKENVSDPSLTITFGRGYLLTLNFTKNTTRYSVQHMYFTYNLSDTEHFPNAISKEIYTMDSTTDIKADINKAYRCVSDIRVYMKNVTVVLRDATIQAYLSSGNFSKEETHCTQDGPSPTTGPPSPSPPLVPTNPTVSKYNVTGNNGTCLLASMALQLNITYLKKDNKTVTRAFNISPNDTSSGSCGINLVTLKVENKNRALELQFGMNASSSLFFLQGVRLNMTLPDALVPTFSISNHSLKALQATVGNSYKCNTEEHIFVSKMLSLNVFSVQVQAFKVDSDRFGSVEECVQDGNNMLIPIAVGGALAGLVLIVLIAYLIGRKRSHAGYQTI</sequence>
<reference key="1">
    <citation type="journal article" date="1990" name="J. Biol. Chem.">
        <title>Characterization and cloning of lgp110, a lysosomal membrane glycoprotein from mouse and rat cells.</title>
        <authorList>
            <person name="Granger B.L."/>
            <person name="Green S.A."/>
            <person name="Gabel C.A."/>
            <person name="Howe C.L."/>
            <person name="Mellman I."/>
            <person name="Helenius A."/>
        </authorList>
    </citation>
    <scope>NUCLEOTIDE SEQUENCE [MRNA]</scope>
</reference>
<reference key="2">
    <citation type="journal article" date="1989" name="Cancer Res.">
        <title>Molecular characterization of P2B/LAMP-1, a major protein target of a metastasis-associated oligosaccharide structure.</title>
        <authorList>
            <person name="Heffernan M."/>
            <person name="Yousefi S."/>
            <person name="Dennis J.W."/>
        </authorList>
    </citation>
    <scope>NUCLEOTIDE SEQUENCE [MRNA]</scope>
    <scope>FUNCTION</scope>
</reference>
<reference key="3">
    <citation type="journal article" date="2004" name="Genome Res.">
        <title>The status, quality, and expansion of the NIH full-length cDNA project: the Mammalian Gene Collection (MGC).</title>
        <authorList>
            <consortium name="The MGC Project Team"/>
        </authorList>
    </citation>
    <scope>NUCLEOTIDE SEQUENCE [LARGE SCALE MRNA]</scope>
    <source>
        <strain>C57BL/6J</strain>
        <tissue>Brain</tissue>
    </source>
</reference>
<reference key="4">
    <citation type="journal article" date="1988" name="J. Biol. Chem.">
        <title>Isolation and sequencing of a cDNA clone encoding lysosomal membrane glycoprotein mouse LAMP-1. Sequence similarity to proteins bearing onco-differentiation antigens.</title>
        <authorList>
            <person name="Chen J.W."/>
            <person name="Cha Y."/>
            <person name="Yuksel K.U."/>
            <person name="Gracy R.W."/>
            <person name="August J.T."/>
        </authorList>
    </citation>
    <scope>NUCLEOTIDE SEQUENCE [MRNA] OF 25-406</scope>
    <scope>PARTIAL PROTEIN SEQUENCE</scope>
</reference>
<reference key="5">
    <citation type="journal article" date="1990" name="J. Biol. Chem.">
        <title>The disulfide structure of mouse lysosome-associated membrane protein 1.</title>
        <authorList>
            <person name="Arterburn L.M."/>
            <person name="Earles B.J."/>
            <person name="August J.T."/>
        </authorList>
    </citation>
    <scope>DISULFIDE BONDS</scope>
</reference>
<reference key="6">
    <citation type="journal article" date="1999" name="J. Biol. Chem.">
        <title>Normal lysosomal morphology and function in LAMP-1-deficient mice.</title>
        <authorList>
            <person name="Andrejewski N."/>
            <person name="Punnonen E.L."/>
            <person name="Guhde G."/>
            <person name="Tanaka Y."/>
            <person name="Luellmann-Rauch R."/>
            <person name="Hartmann D."/>
            <person name="von Figura K."/>
            <person name="Saftig P."/>
        </authorList>
    </citation>
    <scope>DISRUPTION PHENOTYPE</scope>
</reference>
<reference key="7">
    <citation type="journal article" date="2004" name="Mol. Biol. Cell">
        <title>Disturbed cholesterol traffic but normal proteolytic function in LAMP-1/LAMP-2 double-deficient fibroblasts.</title>
        <authorList>
            <person name="Eskelinen E.L."/>
            <person name="Schmidt C.K."/>
            <person name="Neu S."/>
            <person name="Willenborg M."/>
            <person name="Fuertes G."/>
            <person name="Salvador N."/>
            <person name="Tanaka Y."/>
            <person name="Luellmann-Rauch R."/>
            <person name="Hartmann D."/>
            <person name="Heeren J."/>
            <person name="von Figura K."/>
            <person name="Knecht E."/>
            <person name="Saftig P."/>
        </authorList>
    </citation>
    <scope>FUNCTION</scope>
    <scope>DISRUPTION PHENOTYPE</scope>
</reference>
<reference key="8">
    <citation type="journal article" date="2005" name="Mol. Cell. Proteomics">
        <title>High throughput quantitative glycomics and glycoform-focused proteomics of murine dermis and epidermis.</title>
        <authorList>
            <person name="Uematsu R."/>
            <person name="Furukawa J."/>
            <person name="Nakagawa H."/>
            <person name="Shinohara Y."/>
            <person name="Deguchi K."/>
            <person name="Monde K."/>
            <person name="Nishimura S."/>
        </authorList>
    </citation>
    <scope>GLYCOSYLATION [LARGE SCALE ANALYSIS] AT ASN-252</scope>
    <source>
        <tissue>Epidermis</tissue>
    </source>
</reference>
<reference key="9">
    <citation type="journal article" date="2006" name="J. Proteome Res.">
        <title>Proteome-wide characterization of N-glycosylation events by diagonal chromatography.</title>
        <authorList>
            <person name="Ghesquiere B."/>
            <person name="Van Damme J."/>
            <person name="Martens L."/>
            <person name="Vandekerckhove J."/>
            <person name="Gevaert K."/>
        </authorList>
    </citation>
    <scope>GLYCOSYLATION [LARGE SCALE ANALYSIS] AT ASN-97</scope>
    <source>
        <strain>C57BL/6J</strain>
        <tissue>Plasma</tissue>
    </source>
</reference>
<reference key="10">
    <citation type="journal article" date="2009" name="Mol. Cell. Proteomics">
        <title>The mouse C2C12 myoblast cell surface N-linked glycoproteome: identification, glycosite occupancy, and membrane orientation.</title>
        <authorList>
            <person name="Gundry R.L."/>
            <person name="Raginski K."/>
            <person name="Tarasova Y."/>
            <person name="Tchernyshyov I."/>
            <person name="Bausch-Fluck D."/>
            <person name="Elliott S.T."/>
            <person name="Boheler K.R."/>
            <person name="Van Eyk J.E."/>
            <person name="Wollscheid B."/>
        </authorList>
    </citation>
    <scope>GLYCOSYLATION [LARGE SCALE ANALYSIS] AT ASN-177</scope>
    <source>
        <tissue>Myoblast</tissue>
    </source>
</reference>
<reference key="11">
    <citation type="journal article" date="2009" name="Nat. Biotechnol.">
        <title>Mass-spectrometric identification and relative quantification of N-linked cell surface glycoproteins.</title>
        <authorList>
            <person name="Wollscheid B."/>
            <person name="Bausch-Fluck D."/>
            <person name="Henderson C."/>
            <person name="O'Brien R."/>
            <person name="Bibel M."/>
            <person name="Schiess R."/>
            <person name="Aebersold R."/>
            <person name="Watts J.D."/>
        </authorList>
    </citation>
    <scope>GLYCOSYLATION [LARGE SCALE ANALYSIS] AT ASN-97; ASN-101; ASN-159 AND ASN-177</scope>
</reference>
<reference key="12">
    <citation type="journal article" date="2010" name="Cell">
        <title>A tissue-specific atlas of mouse protein phosphorylation and expression.</title>
        <authorList>
            <person name="Huttlin E.L."/>
            <person name="Jedrychowski M.P."/>
            <person name="Elias J.E."/>
            <person name="Goswami T."/>
            <person name="Rad R."/>
            <person name="Beausoleil S.A."/>
            <person name="Villen J."/>
            <person name="Haas W."/>
            <person name="Sowa M.E."/>
            <person name="Gygi S.P."/>
        </authorList>
    </citation>
    <scope>IDENTIFICATION BY MASS SPECTROMETRY [LARGE SCALE ANALYSIS]</scope>
    <source>
        <tissue>Brain</tissue>
        <tissue>Brown adipose tissue</tissue>
        <tissue>Heart</tissue>
        <tissue>Kidney</tissue>
        <tissue>Liver</tissue>
        <tissue>Lung</tissue>
        <tissue>Pancreas</tissue>
        <tissue>Spleen</tissue>
        <tissue>Testis</tissue>
    </source>
</reference>
<reference key="13">
    <citation type="journal article" date="2012" name="J. Cell Sci.">
        <title>The lysosomal polypeptide transporter TAPL is stabilized by interaction with LAMP-1 and LAMP-2.</title>
        <authorList>
            <person name="Demirel O."/>
            <person name="Jan I."/>
            <person name="Wolters D."/>
            <person name="Blanz J."/>
            <person name="Saftig P."/>
            <person name="Tampe R."/>
            <person name="Abele R."/>
        </authorList>
    </citation>
    <scope>INTERACTION WITH ABCB9</scope>
</reference>
<reference key="14">
    <citation type="journal article" date="2013" name="Blood">
        <title>Surface CD107a/LAMP-1 protects natural killer cells from degranulation-associated damage.</title>
        <authorList>
            <person name="Cohnen A."/>
            <person name="Chiang S.C."/>
            <person name="Stojanovic A."/>
            <person name="Schmidt H."/>
            <person name="Claus M."/>
            <person name="Saftig P."/>
            <person name="Janssen O."/>
            <person name="Cerwenka A."/>
            <person name="Bryceson Y.T."/>
            <person name="Watzl C."/>
        </authorList>
    </citation>
    <scope>FUNCTION</scope>
    <scope>DISRUPTION PHENOTYPE</scope>
    <scope>SUBCELLULAR LOCATION</scope>
</reference>
<reference key="15">
    <citation type="journal article" date="2020" name="Nat. Immunol.">
        <title>The NK cell granule protein NKG7 regulates cytotoxic granule exocytosis and inflammation.</title>
        <authorList>
            <person name="Ng S.S."/>
            <person name="De Labastida Rivera F."/>
            <person name="Yan J."/>
            <person name="Corvino D."/>
            <person name="Das I."/>
            <person name="Zhang P."/>
            <person name="Kuns R."/>
            <person name="Chauhan S.B."/>
            <person name="Hou J."/>
            <person name="Li X.Y."/>
            <person name="Frame T.C.M."/>
            <person name="McEnroe B.A."/>
            <person name="Moore E."/>
            <person name="Na J."/>
            <person name="Engel J.A."/>
            <person name="Soon M.S.F."/>
            <person name="Singh B."/>
            <person name="Kueh A.J."/>
            <person name="Herold M.J."/>
            <person name="Montes de Oca M."/>
            <person name="Singh S.S."/>
            <person name="Bunn P.T."/>
            <person name="Aguilera A.R."/>
            <person name="Casey M."/>
            <person name="Braun M."/>
            <person name="Ghazanfari N."/>
            <person name="Wani S."/>
            <person name="Wang Y."/>
            <person name="Amante F.H."/>
            <person name="Edwards C.L."/>
            <person name="Haque A."/>
            <person name="Dougall W.C."/>
            <person name="Singh O.P."/>
            <person name="Baxter A.G."/>
            <person name="Teng M.W.L."/>
            <person name="Loukas A."/>
            <person name="Daly N.L."/>
            <person name="Cloonan N."/>
            <person name="Degli-Esposti M.A."/>
            <person name="Uzonna J."/>
            <person name="Heath W.R."/>
            <person name="Bald T."/>
            <person name="Tey S.K."/>
            <person name="Nakamura K."/>
            <person name="Hill G.R."/>
            <person name="Kumar R."/>
            <person name="Sundar S."/>
            <person name="Smyth M.J."/>
            <person name="Engwerda C.R."/>
        </authorList>
    </citation>
    <scope>SUBCELLULAR LOCATION</scope>
</reference>
<reference evidence="20" key="16">
    <citation type="journal article" date="2016" name="Biochem. Biophys. Res. Commun.">
        <title>Lysosome-associated membrane proteins-1 and -2 (LAMP-1 and LAMP-2) assemble via distinct modes.</title>
        <authorList>
            <person name="Terasawa K."/>
            <person name="Tomabechi Y."/>
            <person name="Ikeda M."/>
            <person name="Ehara H."/>
            <person name="Kukimoto-Niino M."/>
            <person name="Wakiyama M."/>
            <person name="Podyma-Inoue K.A."/>
            <person name="Rajapakshe A.R."/>
            <person name="Watabe T."/>
            <person name="Shirouzu M."/>
            <person name="Hara-Yokoyama M."/>
        </authorList>
    </citation>
    <scope>X-RAY CRYSTALLOGRAPHY (1.50 ANGSTROMS) OF 208-370</scope>
    <scope>DISULFIDE BONDS</scope>
    <scope>GLYCOSYLATION AT ASN-219; ASN-282; ASN-296 AND ASN-311</scope>
</reference>
<name>LAMP1_MOUSE</name>
<protein>
    <recommendedName>
        <fullName>Lysosome-associated membrane glycoprotein 1</fullName>
        <shortName>LAMP-1</shortName>
        <shortName>Lysosome-associated membrane protein 1</shortName>
    </recommendedName>
    <alternativeName>
        <fullName>120 kDa lysosomal membrane glycoprotein</fullName>
    </alternativeName>
    <alternativeName>
        <fullName>CD107 antigen-like family member A</fullName>
    </alternativeName>
    <alternativeName>
        <fullName>LGP-120</fullName>
    </alternativeName>
    <alternativeName>
        <fullName>Lysosomal membrane glycoprotein A</fullName>
        <shortName>LGP-A</shortName>
    </alternativeName>
    <alternativeName>
        <fullName>P2B</fullName>
    </alternativeName>
    <cdAntigenName>CD107a</cdAntigenName>
</protein>
<feature type="signal peptide" evidence="17">
    <location>
        <begin position="1"/>
        <end position="24"/>
    </location>
</feature>
<feature type="chain" id="PRO_0000017105" description="Lysosome-associated membrane glycoprotein 1">
    <location>
        <begin position="25"/>
        <end position="406"/>
    </location>
</feature>
<feature type="topological domain" description="Lumenal" evidence="3">
    <location>
        <begin position="25"/>
        <end position="370"/>
    </location>
</feature>
<feature type="transmembrane region" description="Helical" evidence="4">
    <location>
        <begin position="371"/>
        <end position="394"/>
    </location>
</feature>
<feature type="topological domain" description="Cytoplasmic" evidence="4">
    <location>
        <begin position="395"/>
        <end position="406"/>
    </location>
</feature>
<feature type="region of interest" description="First lumenal domain">
    <location>
        <begin position="25"/>
        <end position="188"/>
    </location>
</feature>
<feature type="region of interest" description="Disordered" evidence="5">
    <location>
        <begin position="180"/>
        <end position="207"/>
    </location>
</feature>
<feature type="region of interest" description="Hinge">
    <location>
        <begin position="189"/>
        <end position="218"/>
    </location>
</feature>
<feature type="region of interest" description="Second lumenal domain">
    <location>
        <begin position="219"/>
        <end position="370"/>
    </location>
</feature>
<feature type="compositionally biased region" description="Pro residues" evidence="5">
    <location>
        <begin position="193"/>
        <end position="205"/>
    </location>
</feature>
<feature type="glycosylation site" description="N-linked (GlcNAc...) asparagine" evidence="3">
    <location>
        <position position="31"/>
    </location>
</feature>
<feature type="glycosylation site" description="N-linked (GlcNAc...) asparagine" evidence="3">
    <location>
        <position position="52"/>
    </location>
</feature>
<feature type="glycosylation site" description="N-linked (GlcNAc...) asparagine" evidence="3">
    <location>
        <position position="58"/>
    </location>
</feature>
<feature type="glycosylation site" description="N-linked (GlcNAc...) asparagine" evidence="3">
    <location>
        <position position="70"/>
    </location>
</feature>
<feature type="glycosylation site" description="N-linked (GlcNAc...) asparagine" evidence="3">
    <location>
        <position position="78"/>
    </location>
</feature>
<feature type="glycosylation site" description="N-linked (GlcNAc...) asparagine" evidence="9 10">
    <location>
        <position position="97"/>
    </location>
</feature>
<feature type="glycosylation site" description="N-linked (GlcNAc...) asparagine" evidence="10">
    <location>
        <position position="101"/>
    </location>
</feature>
<feature type="glycosylation site" description="N-linked (GlcNAc...) asparagine" evidence="3">
    <location>
        <position position="115"/>
    </location>
</feature>
<feature type="glycosylation site" description="N-linked (GlcNAc...) asparagine" evidence="10">
    <location>
        <position position="159"/>
    </location>
</feature>
<feature type="glycosylation site" description="N-linked (GlcNAc...) asparagine" evidence="10 11">
    <location>
        <position position="177"/>
    </location>
</feature>
<feature type="glycosylation site" description="N-linked (GlcNAc...) asparagine" evidence="3">
    <location>
        <position position="214"/>
    </location>
</feature>
<feature type="glycosylation site" description="N-linked (GlcNAc...) asparagine" evidence="16 20">
    <location>
        <position position="219"/>
    </location>
</feature>
<feature type="glycosylation site" description="N-linked (GlcNAc...) asparagine" evidence="3">
    <location>
        <position position="232"/>
    </location>
</feature>
<feature type="glycosylation site" description="N-linked (GlcNAc...) asparagine" evidence="3">
    <location>
        <position position="240"/>
    </location>
</feature>
<feature type="glycosylation site" description="N-linked (GlcNAc...) (high mannose) asparagine" evidence="8">
    <location>
        <position position="252"/>
    </location>
</feature>
<feature type="glycosylation site" description="N-linked (GlcNAc...) asparagine" evidence="16 20">
    <location>
        <position position="282"/>
    </location>
</feature>
<feature type="glycosylation site" description="N-linked (GlcNAc...) asparagine" evidence="16 20">
    <location>
        <position position="296"/>
    </location>
</feature>
<feature type="glycosylation site" description="N-linked (GlcNAc...) asparagine" evidence="16 20">
    <location>
        <position position="311"/>
    </location>
</feature>
<feature type="disulfide bond" evidence="4 13">
    <location>
        <begin position="35"/>
        <end position="74"/>
    </location>
</feature>
<feature type="disulfide bond" evidence="4 13">
    <location>
        <begin position="149"/>
        <end position="185"/>
    </location>
</feature>
<feature type="disulfide bond" evidence="4 13 16 20">
    <location>
        <begin position="222"/>
        <end position="259"/>
    </location>
</feature>
<feature type="disulfide bond" evidence="4 13 16 20">
    <location>
        <begin position="327"/>
        <end position="364"/>
    </location>
</feature>
<feature type="sequence conflict" description="In Ref. 2." evidence="18" ref="2">
    <original>MAAPGARRPL</original>
    <variation>MRPPRAAAV</variation>
    <location>
        <begin position="1"/>
        <end position="10"/>
    </location>
</feature>
<feature type="sequence conflict" description="In Ref. 4; AAA39411." evidence="18" ref="4">
    <original>LF</original>
    <variation>IP</variation>
    <location>
        <begin position="25"/>
        <end position="26"/>
    </location>
</feature>
<feature type="sequence conflict" description="In Ref. 2 and 4." evidence="18" ref="2 4">
    <original>V</original>
    <variation>I</variation>
    <location>
        <position position="385"/>
    </location>
</feature>
<feature type="strand" evidence="21">
    <location>
        <begin position="211"/>
        <end position="217"/>
    </location>
</feature>
<feature type="strand" evidence="21">
    <location>
        <begin position="220"/>
        <end position="237"/>
    </location>
</feature>
<feature type="strand" evidence="21">
    <location>
        <begin position="242"/>
        <end position="248"/>
    </location>
</feature>
<feature type="strand" evidence="21">
    <location>
        <begin position="253"/>
        <end position="258"/>
    </location>
</feature>
<feature type="strand" evidence="21">
    <location>
        <begin position="261"/>
        <end position="270"/>
    </location>
</feature>
<feature type="strand" evidence="21">
    <location>
        <begin position="273"/>
        <end position="281"/>
    </location>
</feature>
<feature type="turn" evidence="21">
    <location>
        <begin position="283"/>
        <end position="285"/>
    </location>
</feature>
<feature type="strand" evidence="21">
    <location>
        <begin position="287"/>
        <end position="298"/>
    </location>
</feature>
<feature type="strand" evidence="21">
    <location>
        <begin position="302"/>
        <end position="304"/>
    </location>
</feature>
<feature type="strand" evidence="21">
    <location>
        <begin position="306"/>
        <end position="311"/>
    </location>
</feature>
<feature type="strand" evidence="21">
    <location>
        <begin position="316"/>
        <end position="320"/>
    </location>
</feature>
<feature type="strand" evidence="21">
    <location>
        <begin position="323"/>
        <end position="327"/>
    </location>
</feature>
<feature type="strand" evidence="21">
    <location>
        <begin position="331"/>
        <end position="336"/>
    </location>
</feature>
<feature type="strand" evidence="21">
    <location>
        <begin position="339"/>
        <end position="351"/>
    </location>
</feature>
<feature type="strand" evidence="21">
    <location>
        <begin position="360"/>
        <end position="363"/>
    </location>
</feature>
<feature type="helix" evidence="21">
    <location>
        <begin position="365"/>
        <end position="367"/>
    </location>
</feature>